<feature type="chain" id="PRO_0000128078" description="Uncharacterized protein AF_1986">
    <location>
        <begin position="1"/>
        <end position="203"/>
    </location>
</feature>
<gene>
    <name type="ordered locus">AF_1986</name>
</gene>
<sequence>MLSVLLIAEDGEWHRYKELEECLINDYHVDYSGQISTDIAELSRIEFSYEIIFFLKPVEFSEIPAISRLAKSKILVFHVLNNNVPIRLSENLLPVADCLELNASAMRGKLEYFRGVDVIKLLHPYHMEVDEECEVILNGNRNTKVLLGDITFRTGKNVVFGVRKGNMAFFSADIFSNDALKESDNCRFIKNLIKELVGKAEVY</sequence>
<keyword id="KW-1185">Reference proteome</keyword>
<reference key="1">
    <citation type="journal article" date="1997" name="Nature">
        <title>The complete genome sequence of the hyperthermophilic, sulphate-reducing archaeon Archaeoglobus fulgidus.</title>
        <authorList>
            <person name="Klenk H.-P."/>
            <person name="Clayton R.A."/>
            <person name="Tomb J.-F."/>
            <person name="White O."/>
            <person name="Nelson K.E."/>
            <person name="Ketchum K.A."/>
            <person name="Dodson R.J."/>
            <person name="Gwinn M.L."/>
            <person name="Hickey E.K."/>
            <person name="Peterson J.D."/>
            <person name="Richardson D.L."/>
            <person name="Kerlavage A.R."/>
            <person name="Graham D.E."/>
            <person name="Kyrpides N.C."/>
            <person name="Fleischmann R.D."/>
            <person name="Quackenbush J."/>
            <person name="Lee N.H."/>
            <person name="Sutton G.G."/>
            <person name="Gill S.R."/>
            <person name="Kirkness E.F."/>
            <person name="Dougherty B.A."/>
            <person name="McKenney K."/>
            <person name="Adams M.D."/>
            <person name="Loftus B.J."/>
            <person name="Peterson S.N."/>
            <person name="Reich C.I."/>
            <person name="McNeil L.K."/>
            <person name="Badger J.H."/>
            <person name="Glodek A."/>
            <person name="Zhou L."/>
            <person name="Overbeek R."/>
            <person name="Gocayne J.D."/>
            <person name="Weidman J.F."/>
            <person name="McDonald L.A."/>
            <person name="Utterback T.R."/>
            <person name="Cotton M.D."/>
            <person name="Spriggs T."/>
            <person name="Artiach P."/>
            <person name="Kaine B.P."/>
            <person name="Sykes S.M."/>
            <person name="Sadow P.W."/>
            <person name="D'Andrea K.P."/>
            <person name="Bowman C."/>
            <person name="Fujii C."/>
            <person name="Garland S.A."/>
            <person name="Mason T.M."/>
            <person name="Olsen G.J."/>
            <person name="Fraser C.M."/>
            <person name="Smith H.O."/>
            <person name="Woese C.R."/>
            <person name="Venter J.C."/>
        </authorList>
    </citation>
    <scope>NUCLEOTIDE SEQUENCE [LARGE SCALE GENOMIC DNA]</scope>
    <source>
        <strain>ATCC 49558 / DSM 4304 / JCM 9628 / NBRC 100126 / VC-16</strain>
    </source>
</reference>
<name>Y1986_ARCFU</name>
<protein>
    <recommendedName>
        <fullName>Uncharacterized protein AF_1986</fullName>
    </recommendedName>
</protein>
<proteinExistence type="predicted"/>
<accession>O28293</accession>
<organism>
    <name type="scientific">Archaeoglobus fulgidus (strain ATCC 49558 / DSM 4304 / JCM 9628 / NBRC 100126 / VC-16)</name>
    <dbReference type="NCBI Taxonomy" id="224325"/>
    <lineage>
        <taxon>Archaea</taxon>
        <taxon>Methanobacteriati</taxon>
        <taxon>Methanobacteriota</taxon>
        <taxon>Archaeoglobi</taxon>
        <taxon>Archaeoglobales</taxon>
        <taxon>Archaeoglobaceae</taxon>
        <taxon>Archaeoglobus</taxon>
    </lineage>
</organism>
<dbReference type="EMBL" id="AE000782">
    <property type="protein sequence ID" value="AAB89279.1"/>
    <property type="molecule type" value="Genomic_DNA"/>
</dbReference>
<dbReference type="PIR" id="A69498">
    <property type="entry name" value="A69498"/>
</dbReference>
<dbReference type="RefSeq" id="WP_010879478.1">
    <property type="nucleotide sequence ID" value="NC_000917.1"/>
</dbReference>
<dbReference type="PaxDb" id="224325-AF_1986"/>
<dbReference type="EnsemblBacteria" id="AAB89279">
    <property type="protein sequence ID" value="AAB89279"/>
    <property type="gene ID" value="AF_1986"/>
</dbReference>
<dbReference type="KEGG" id="afu:AF_1986"/>
<dbReference type="eggNOG" id="arCOG12212">
    <property type="taxonomic scope" value="Archaea"/>
</dbReference>
<dbReference type="HOGENOM" id="CLU_1346351_0_0_2"/>
<dbReference type="OrthoDB" id="383991at2157"/>
<dbReference type="Proteomes" id="UP000002199">
    <property type="component" value="Chromosome"/>
</dbReference>